<name>RK3_PAUCH</name>
<keyword id="KW-0994">Organellar chromatophore</keyword>
<keyword id="KW-0934">Plastid</keyword>
<keyword id="KW-0687">Ribonucleoprotein</keyword>
<keyword id="KW-0689">Ribosomal protein</keyword>
<keyword id="KW-0694">RNA-binding</keyword>
<keyword id="KW-0699">rRNA-binding</keyword>
<gene>
    <name type="primary">rpl3</name>
    <name type="ordered locus">PCC_0597</name>
</gene>
<protein>
    <recommendedName>
        <fullName evidence="3">Large ribosomal subunit protein uL3c</fullName>
    </recommendedName>
    <alternativeName>
        <fullName>50S ribosomal protein L3, organellar chromatophore</fullName>
    </alternativeName>
</protein>
<proteinExistence type="inferred from homology"/>
<evidence type="ECO:0000250" key="1"/>
<evidence type="ECO:0000256" key="2">
    <source>
        <dbReference type="SAM" id="MobiDB-lite"/>
    </source>
</evidence>
<evidence type="ECO:0000305" key="3"/>
<geneLocation type="organellar chromatophore"/>
<feature type="chain" id="PRO_0000353629" description="Large ribosomal subunit protein uL3c">
    <location>
        <begin position="1"/>
        <end position="218"/>
    </location>
</feature>
<feature type="region of interest" description="Disordered" evidence="2">
    <location>
        <begin position="127"/>
        <end position="161"/>
    </location>
</feature>
<accession>B1X508</accession>
<reference key="1">
    <citation type="journal article" date="2008" name="Curr. Biol.">
        <title>Chromatophore genome sequence of Paulinella sheds light on acquisition of photosynthesis by eukaryotes.</title>
        <authorList>
            <person name="Nowack E.C.M."/>
            <person name="Melkonian M."/>
            <person name="Gloeckner G."/>
        </authorList>
    </citation>
    <scope>NUCLEOTIDE SEQUENCE [LARGE SCALE GENOMIC DNA]</scope>
</reference>
<sequence>MSIGILGKKLGMSQFFDEEGKAVPVTLIEAGPCRITQLKSIDTDGYTAVQLGYGETRQKLVNKPSKGHLARSGEQLLSHLREYRVETIDGLKLGNSITVEDFKAGQKVDVSGDSMGRGFSGYQKRHGFSRGPMTHGSKNHREPGSTGAGTTPGRIYPGKRMAGRYGGKQITTRGLVIVKVDTGHNLLVVKGSVPGKPGSLLNIFPAKGVNSKFANGGK</sequence>
<comment type="function">
    <text evidence="1">One of the primary rRNA binding proteins, it binds directly near the 3'-end of the 23S rRNA, where it nucleates assembly of the 50S subunit.</text>
</comment>
<comment type="subunit">
    <text evidence="1">Part of the 50S ribosomal subunit.</text>
</comment>
<comment type="subcellular location">
    <subcellularLocation>
        <location>Plastid</location>
        <location>Organellar chromatophore</location>
    </subcellularLocation>
</comment>
<comment type="similarity">
    <text evidence="3">Belongs to the universal ribosomal protein uL3 family.</text>
</comment>
<organism>
    <name type="scientific">Paulinella chromatophora</name>
    <dbReference type="NCBI Taxonomy" id="39717"/>
    <lineage>
        <taxon>Eukaryota</taxon>
        <taxon>Sar</taxon>
        <taxon>Rhizaria</taxon>
        <taxon>Cercozoa</taxon>
        <taxon>Imbricatea</taxon>
        <taxon>Silicofilosea</taxon>
        <taxon>Euglyphida</taxon>
        <taxon>Paulinellidae</taxon>
        <taxon>Paulinella</taxon>
    </lineage>
</organism>
<dbReference type="EMBL" id="CP000815">
    <property type="protein sequence ID" value="ACB43027.1"/>
    <property type="molecule type" value="Genomic_DNA"/>
</dbReference>
<dbReference type="RefSeq" id="YP_002049237.1">
    <property type="nucleotide sequence ID" value="NC_011087.1"/>
</dbReference>
<dbReference type="SMR" id="B1X508"/>
<dbReference type="GeneID" id="6481218"/>
<dbReference type="GO" id="GO:0022625">
    <property type="term" value="C:cytosolic large ribosomal subunit"/>
    <property type="evidence" value="ECO:0007669"/>
    <property type="project" value="TreeGrafter"/>
</dbReference>
<dbReference type="GO" id="GO:0070111">
    <property type="term" value="C:organellar chromatophore"/>
    <property type="evidence" value="ECO:0007669"/>
    <property type="project" value="UniProtKB-SubCell"/>
</dbReference>
<dbReference type="GO" id="GO:0009536">
    <property type="term" value="C:plastid"/>
    <property type="evidence" value="ECO:0007669"/>
    <property type="project" value="UniProtKB-KW"/>
</dbReference>
<dbReference type="GO" id="GO:0019843">
    <property type="term" value="F:rRNA binding"/>
    <property type="evidence" value="ECO:0007669"/>
    <property type="project" value="UniProtKB-KW"/>
</dbReference>
<dbReference type="GO" id="GO:0003735">
    <property type="term" value="F:structural constituent of ribosome"/>
    <property type="evidence" value="ECO:0007669"/>
    <property type="project" value="InterPro"/>
</dbReference>
<dbReference type="GO" id="GO:0006412">
    <property type="term" value="P:translation"/>
    <property type="evidence" value="ECO:0007669"/>
    <property type="project" value="InterPro"/>
</dbReference>
<dbReference type="FunFam" id="3.30.160.810:FF:000001">
    <property type="entry name" value="50S ribosomal protein L3"/>
    <property type="match status" value="1"/>
</dbReference>
<dbReference type="FunFam" id="2.40.30.10:FF:000065">
    <property type="entry name" value="50S ribosomal protein L3, chloroplastic"/>
    <property type="match status" value="1"/>
</dbReference>
<dbReference type="Gene3D" id="3.30.160.810">
    <property type="match status" value="1"/>
</dbReference>
<dbReference type="Gene3D" id="2.40.30.10">
    <property type="entry name" value="Translation factors"/>
    <property type="match status" value="1"/>
</dbReference>
<dbReference type="HAMAP" id="MF_01325_B">
    <property type="entry name" value="Ribosomal_uL3_B"/>
    <property type="match status" value="1"/>
</dbReference>
<dbReference type="InterPro" id="IPR000597">
    <property type="entry name" value="Ribosomal_uL3"/>
</dbReference>
<dbReference type="InterPro" id="IPR019927">
    <property type="entry name" value="Ribosomal_uL3_bac/org-type"/>
</dbReference>
<dbReference type="InterPro" id="IPR019926">
    <property type="entry name" value="Ribosomal_uL3_CS"/>
</dbReference>
<dbReference type="InterPro" id="IPR009000">
    <property type="entry name" value="Transl_B-barrel_sf"/>
</dbReference>
<dbReference type="NCBIfam" id="TIGR03625">
    <property type="entry name" value="L3_bact"/>
    <property type="match status" value="1"/>
</dbReference>
<dbReference type="PANTHER" id="PTHR11229">
    <property type="entry name" value="50S RIBOSOMAL PROTEIN L3"/>
    <property type="match status" value="1"/>
</dbReference>
<dbReference type="PANTHER" id="PTHR11229:SF16">
    <property type="entry name" value="LARGE RIBOSOMAL SUBUNIT PROTEIN UL3C"/>
    <property type="match status" value="1"/>
</dbReference>
<dbReference type="Pfam" id="PF00297">
    <property type="entry name" value="Ribosomal_L3"/>
    <property type="match status" value="1"/>
</dbReference>
<dbReference type="SUPFAM" id="SSF50447">
    <property type="entry name" value="Translation proteins"/>
    <property type="match status" value="1"/>
</dbReference>
<dbReference type="PROSITE" id="PS00474">
    <property type="entry name" value="RIBOSOMAL_L3"/>
    <property type="match status" value="1"/>
</dbReference>